<sequence>MEPSSEQESQESQKVDMEPVFRRESFAALRRNNVAARQLRVVTLNAWCLPQPWPIGSTDRVHRLNKIGQYMIDELYDIVGLQELWSYYDFVRLSEQVSSVYPYFHYFHSGFTGSGVCVFSRHPIVSTLTNRYSLNGFAHHIHRGDWFGGKVVGLTEIEIDGDLRVNFYTTHLHAEYDRENDLYLPHRTAQAFELAQFVRHTARGADVVIVTGDLNMEPCDLGFRLILSHAKLFDAWRMSHEVENEDSEGELLKFRGIAKGGTCDRPDNCYTKRALKNVDDSKRIDYMLFKSGRCNVKLEECEITLNQIPGEDLNYSDHVGLRARFTIDDRFRHEKSVNTWEPNRPLLIEAIGLVAGGERRARTDRIFFFILAVICLILILGSLFFEVFPMGFAVLRFALTVVGVFFVWQGLIGLTLERKALKAAKQAIQQILNN</sequence>
<comment type="function">
    <text evidence="2 4">Catalyzes the hydrolysis of sphingomyelin producing a ceramide (N-acyl-sphingoid base) and a phosphocholine (By similarity). C.elegans contain specific sphingoid bases, which are unique or different in structure compared to the sphingoid bases found in other animals. Two examples of these distinctive compounds are: 15-methylhexadecasphinganine and 15-methylhexadecasphing-4-enine (PubMed:30155209).</text>
</comment>
<comment type="catalytic activity">
    <reaction evidence="5">
        <text>an N-(acyl)-sphingosylphosphocholine + H2O = an N-acyl-sphingoid base + phosphocholine + H(+)</text>
        <dbReference type="Rhea" id="RHEA:45300"/>
        <dbReference type="ChEBI" id="CHEBI:15377"/>
        <dbReference type="ChEBI" id="CHEBI:15378"/>
        <dbReference type="ChEBI" id="CHEBI:64583"/>
        <dbReference type="ChEBI" id="CHEBI:83273"/>
        <dbReference type="ChEBI" id="CHEBI:295975"/>
    </reaction>
    <physiologicalReaction direction="left-to-right" evidence="5">
        <dbReference type="Rhea" id="RHEA:45301"/>
    </physiologicalReaction>
</comment>
<comment type="catalytic activity">
    <reaction evidence="2">
        <text>a sphingomyelin + H2O = phosphocholine + an N-acylsphing-4-enine + H(+)</text>
        <dbReference type="Rhea" id="RHEA:19253"/>
        <dbReference type="ChEBI" id="CHEBI:15377"/>
        <dbReference type="ChEBI" id="CHEBI:15378"/>
        <dbReference type="ChEBI" id="CHEBI:17636"/>
        <dbReference type="ChEBI" id="CHEBI:52639"/>
        <dbReference type="ChEBI" id="CHEBI:295975"/>
        <dbReference type="EC" id="3.1.4.12"/>
    </reaction>
    <physiologicalReaction direction="left-to-right" evidence="2">
        <dbReference type="Rhea" id="RHEA:19254"/>
    </physiologicalReaction>
</comment>
<comment type="catalytic activity">
    <reaction evidence="5">
        <text>an N-acyl-15-methylhexadecasphing-4-enine-1-phosphocholine + H2O = an N-acyl-15-methylhexadecasphing-4-enine + phosphocholine + H(+)</text>
        <dbReference type="Rhea" id="RHEA:34739"/>
        <dbReference type="ChEBI" id="CHEBI:15377"/>
        <dbReference type="ChEBI" id="CHEBI:15378"/>
        <dbReference type="ChEBI" id="CHEBI:70775"/>
        <dbReference type="ChEBI" id="CHEBI:70846"/>
        <dbReference type="ChEBI" id="CHEBI:295975"/>
    </reaction>
    <physiologicalReaction direction="left-to-right" evidence="5">
        <dbReference type="Rhea" id="RHEA:34740"/>
    </physiologicalReaction>
</comment>
<comment type="pathway">
    <text>Lipid metabolism; sphingolipid metabolism.</text>
</comment>
<comment type="subcellular location">
    <subcellularLocation>
        <location evidence="5">Membrane</location>
        <topology evidence="5">Multi-pass membrane protein</topology>
    </subcellularLocation>
</comment>
<comment type="similarity">
    <text evidence="5">Belongs to the neutral sphingomyelinase family.</text>
</comment>
<feature type="chain" id="PRO_0000075689" description="Putative neutral sphingomyelinase">
    <location>
        <begin position="1"/>
        <end position="434"/>
    </location>
</feature>
<feature type="transmembrane region" description="Helical" evidence="3">
    <location>
        <begin position="366"/>
        <end position="388"/>
    </location>
</feature>
<feature type="transmembrane region" description="Helical" evidence="3">
    <location>
        <begin position="392"/>
        <end position="414"/>
    </location>
</feature>
<feature type="active site" description="Proton acceptor" evidence="1">
    <location>
        <position position="318"/>
    </location>
</feature>
<feature type="binding site" evidence="1">
    <location>
        <position position="83"/>
    </location>
    <ligand>
        <name>Mg(2+)</name>
        <dbReference type="ChEBI" id="CHEBI:18420"/>
    </ligand>
</feature>
<feature type="site" description="Important for substrate recognition" evidence="1">
    <location>
        <position position="215"/>
    </location>
</feature>
<proteinExistence type="inferred from homology"/>
<accession>O45870</accession>
<name>NSMA_CAEEL</name>
<dbReference type="EC" id="3.1.4.12"/>
<dbReference type="EMBL" id="Z82060">
    <property type="protein sequence ID" value="CAB04885.2"/>
    <property type="molecule type" value="Genomic_DNA"/>
</dbReference>
<dbReference type="PIR" id="T25386">
    <property type="entry name" value="T25386"/>
</dbReference>
<dbReference type="RefSeq" id="NP_493169.2">
    <property type="nucleotide sequence ID" value="NM_060768.7"/>
</dbReference>
<dbReference type="SMR" id="O45870"/>
<dbReference type="BioGRID" id="38515">
    <property type="interactions" value="10"/>
</dbReference>
<dbReference type="FunCoup" id="O45870">
    <property type="interactions" value="1367"/>
</dbReference>
<dbReference type="STRING" id="6239.T27F6.6.1"/>
<dbReference type="iPTMnet" id="O45870"/>
<dbReference type="PaxDb" id="6239-T27F6.6"/>
<dbReference type="PeptideAtlas" id="O45870"/>
<dbReference type="EnsemblMetazoa" id="T27F6.6.1">
    <property type="protein sequence ID" value="T27F6.6.1"/>
    <property type="gene ID" value="WBGene00012105"/>
</dbReference>
<dbReference type="EnsemblMetazoa" id="T27F6.6.2">
    <property type="protein sequence ID" value="T27F6.6.2"/>
    <property type="gene ID" value="WBGene00012105"/>
</dbReference>
<dbReference type="GeneID" id="173118"/>
<dbReference type="KEGG" id="cel:CELE_T27F6.6"/>
<dbReference type="UCSC" id="T27F6.6">
    <property type="organism name" value="c. elegans"/>
</dbReference>
<dbReference type="AGR" id="WB:WBGene00012105"/>
<dbReference type="CTD" id="173118"/>
<dbReference type="WormBase" id="T27F6.6">
    <property type="protein sequence ID" value="CE34214"/>
    <property type="gene ID" value="WBGene00012105"/>
</dbReference>
<dbReference type="eggNOG" id="KOG3873">
    <property type="taxonomic scope" value="Eukaryota"/>
</dbReference>
<dbReference type="GeneTree" id="ENSGT00390000009166"/>
<dbReference type="HOGENOM" id="CLU_034001_1_0_1"/>
<dbReference type="InParanoid" id="O45870"/>
<dbReference type="OMA" id="SCEWEPN"/>
<dbReference type="OrthoDB" id="387657at2759"/>
<dbReference type="PhylomeDB" id="O45870"/>
<dbReference type="Reactome" id="R-CEL-9840310">
    <property type="pathway name" value="Glycosphingolipid catabolism"/>
</dbReference>
<dbReference type="UniPathway" id="UPA00222"/>
<dbReference type="PRO" id="PR:O45870"/>
<dbReference type="Proteomes" id="UP000001940">
    <property type="component" value="Chromosome I"/>
</dbReference>
<dbReference type="Bgee" id="WBGene00012105">
    <property type="expression patterns" value="Expressed in germ line (C elegans) and 4 other cell types or tissues"/>
</dbReference>
<dbReference type="GO" id="GO:0005901">
    <property type="term" value="C:caveola"/>
    <property type="evidence" value="ECO:0000318"/>
    <property type="project" value="GO_Central"/>
</dbReference>
<dbReference type="GO" id="GO:0071944">
    <property type="term" value="C:cell periphery"/>
    <property type="evidence" value="ECO:0000318"/>
    <property type="project" value="GO_Central"/>
</dbReference>
<dbReference type="GO" id="GO:0005783">
    <property type="term" value="C:endoplasmic reticulum"/>
    <property type="evidence" value="ECO:0000318"/>
    <property type="project" value="GO_Central"/>
</dbReference>
<dbReference type="GO" id="GO:0046872">
    <property type="term" value="F:metal ion binding"/>
    <property type="evidence" value="ECO:0007669"/>
    <property type="project" value="UniProtKB-KW"/>
</dbReference>
<dbReference type="GO" id="GO:0004767">
    <property type="term" value="F:sphingomyelin phosphodiesterase activity"/>
    <property type="evidence" value="ECO:0000318"/>
    <property type="project" value="GO_Central"/>
</dbReference>
<dbReference type="GO" id="GO:0046513">
    <property type="term" value="P:ceramide biosynthetic process"/>
    <property type="evidence" value="ECO:0000318"/>
    <property type="project" value="GO_Central"/>
</dbReference>
<dbReference type="GO" id="GO:0030149">
    <property type="term" value="P:sphingolipid catabolic process"/>
    <property type="evidence" value="ECO:0000318"/>
    <property type="project" value="GO_Central"/>
</dbReference>
<dbReference type="GO" id="GO:0006684">
    <property type="term" value="P:sphingomyelin metabolic process"/>
    <property type="evidence" value="ECO:0000318"/>
    <property type="project" value="GO_Central"/>
</dbReference>
<dbReference type="FunFam" id="3.60.10.10:FF:000159">
    <property type="entry name" value="Putative neutral sphingomyelinase"/>
    <property type="match status" value="1"/>
</dbReference>
<dbReference type="Gene3D" id="3.60.10.10">
    <property type="entry name" value="Endonuclease/exonuclease/phosphatase"/>
    <property type="match status" value="1"/>
</dbReference>
<dbReference type="InterPro" id="IPR036691">
    <property type="entry name" value="Endo/exonu/phosph_ase_sf"/>
</dbReference>
<dbReference type="InterPro" id="IPR005135">
    <property type="entry name" value="Endo/exonuclease/phosphatase"/>
</dbReference>
<dbReference type="InterPro" id="IPR038772">
    <property type="entry name" value="Sph/SMPD2-like"/>
</dbReference>
<dbReference type="PANTHER" id="PTHR16320:SF24">
    <property type="entry name" value="PHOSPHODIESTERASE, PUTATIVE-RELATED"/>
    <property type="match status" value="1"/>
</dbReference>
<dbReference type="PANTHER" id="PTHR16320">
    <property type="entry name" value="SPHINGOMYELINASE FAMILY MEMBER"/>
    <property type="match status" value="1"/>
</dbReference>
<dbReference type="Pfam" id="PF03372">
    <property type="entry name" value="Exo_endo_phos"/>
    <property type="match status" value="1"/>
</dbReference>
<dbReference type="SUPFAM" id="SSF56219">
    <property type="entry name" value="DNase I-like"/>
    <property type="match status" value="1"/>
</dbReference>
<organism>
    <name type="scientific">Caenorhabditis elegans</name>
    <dbReference type="NCBI Taxonomy" id="6239"/>
    <lineage>
        <taxon>Eukaryota</taxon>
        <taxon>Metazoa</taxon>
        <taxon>Ecdysozoa</taxon>
        <taxon>Nematoda</taxon>
        <taxon>Chromadorea</taxon>
        <taxon>Rhabditida</taxon>
        <taxon>Rhabditina</taxon>
        <taxon>Rhabditomorpha</taxon>
        <taxon>Rhabditoidea</taxon>
        <taxon>Rhabditidae</taxon>
        <taxon>Peloderinae</taxon>
        <taxon>Caenorhabditis</taxon>
    </lineage>
</organism>
<evidence type="ECO:0000250" key="1"/>
<evidence type="ECO:0000250" key="2">
    <source>
        <dbReference type="UniProtKB" id="O70572"/>
    </source>
</evidence>
<evidence type="ECO:0000255" key="3"/>
<evidence type="ECO:0000269" key="4">
    <source>
    </source>
</evidence>
<evidence type="ECO:0000305" key="5"/>
<reference key="1">
    <citation type="journal article" date="1998" name="Science">
        <title>Genome sequence of the nematode C. elegans: a platform for investigating biology.</title>
        <authorList>
            <consortium name="The C. elegans sequencing consortium"/>
        </authorList>
    </citation>
    <scope>NUCLEOTIDE SEQUENCE [LARGE SCALE GENOMIC DNA]</scope>
    <source>
        <strain>Bristol N2</strain>
    </source>
</reference>
<reference key="2">
    <citation type="journal article" date="2017" name="Chem. Sci.">
        <title>Structure and conserved function of iso-branched sphingoid bases from the nematode Caenorhabditis elegans.</title>
        <authorList>
            <person name="Hannich J.T."/>
            <person name="Mellal D."/>
            <person name="Feng S."/>
            <person name="Zumbuehl A."/>
            <person name="Riezman H."/>
        </authorList>
    </citation>
    <scope>FUNCTION</scope>
</reference>
<gene>
    <name type="ORF">T27F6.6</name>
</gene>
<protein>
    <recommendedName>
        <fullName>Putative neutral sphingomyelinase</fullName>
        <ecNumber>3.1.4.12</ecNumber>
    </recommendedName>
</protein>
<keyword id="KW-0378">Hydrolase</keyword>
<keyword id="KW-0443">Lipid metabolism</keyword>
<keyword id="KW-0460">Magnesium</keyword>
<keyword id="KW-0472">Membrane</keyword>
<keyword id="KW-0479">Metal-binding</keyword>
<keyword id="KW-1185">Reference proteome</keyword>
<keyword id="KW-0746">Sphingolipid metabolism</keyword>
<keyword id="KW-0812">Transmembrane</keyword>
<keyword id="KW-1133">Transmembrane helix</keyword>